<name>RS2_YERPG</name>
<dbReference type="EMBL" id="CP000901">
    <property type="protein sequence ID" value="ABX87057.1"/>
    <property type="molecule type" value="Genomic_DNA"/>
</dbReference>
<dbReference type="RefSeq" id="WP_002221800.1">
    <property type="nucleotide sequence ID" value="NZ_CP009935.1"/>
</dbReference>
<dbReference type="SMR" id="A9R396"/>
<dbReference type="GeneID" id="57977517"/>
<dbReference type="KEGG" id="ypg:YpAngola_A3435"/>
<dbReference type="PATRIC" id="fig|349746.12.peg.130"/>
<dbReference type="GO" id="GO:0022627">
    <property type="term" value="C:cytosolic small ribosomal subunit"/>
    <property type="evidence" value="ECO:0007669"/>
    <property type="project" value="TreeGrafter"/>
</dbReference>
<dbReference type="GO" id="GO:0003735">
    <property type="term" value="F:structural constituent of ribosome"/>
    <property type="evidence" value="ECO:0007669"/>
    <property type="project" value="InterPro"/>
</dbReference>
<dbReference type="GO" id="GO:0006412">
    <property type="term" value="P:translation"/>
    <property type="evidence" value="ECO:0007669"/>
    <property type="project" value="UniProtKB-UniRule"/>
</dbReference>
<dbReference type="CDD" id="cd01425">
    <property type="entry name" value="RPS2"/>
    <property type="match status" value="1"/>
</dbReference>
<dbReference type="FunFam" id="1.10.287.610:FF:000001">
    <property type="entry name" value="30S ribosomal protein S2"/>
    <property type="match status" value="1"/>
</dbReference>
<dbReference type="Gene3D" id="3.40.50.10490">
    <property type="entry name" value="Glucose-6-phosphate isomerase like protein, domain 1"/>
    <property type="match status" value="1"/>
</dbReference>
<dbReference type="Gene3D" id="1.10.287.610">
    <property type="entry name" value="Helix hairpin bin"/>
    <property type="match status" value="1"/>
</dbReference>
<dbReference type="HAMAP" id="MF_00291_B">
    <property type="entry name" value="Ribosomal_uS2_B"/>
    <property type="match status" value="1"/>
</dbReference>
<dbReference type="InterPro" id="IPR001865">
    <property type="entry name" value="Ribosomal_uS2"/>
</dbReference>
<dbReference type="InterPro" id="IPR005706">
    <property type="entry name" value="Ribosomal_uS2_bac/mit/plastid"/>
</dbReference>
<dbReference type="InterPro" id="IPR018130">
    <property type="entry name" value="Ribosomal_uS2_CS"/>
</dbReference>
<dbReference type="InterPro" id="IPR023591">
    <property type="entry name" value="Ribosomal_uS2_flav_dom_sf"/>
</dbReference>
<dbReference type="NCBIfam" id="TIGR01011">
    <property type="entry name" value="rpsB_bact"/>
    <property type="match status" value="1"/>
</dbReference>
<dbReference type="PANTHER" id="PTHR12534">
    <property type="entry name" value="30S RIBOSOMAL PROTEIN S2 PROKARYOTIC AND ORGANELLAR"/>
    <property type="match status" value="1"/>
</dbReference>
<dbReference type="PANTHER" id="PTHR12534:SF0">
    <property type="entry name" value="SMALL RIBOSOMAL SUBUNIT PROTEIN US2M"/>
    <property type="match status" value="1"/>
</dbReference>
<dbReference type="Pfam" id="PF00318">
    <property type="entry name" value="Ribosomal_S2"/>
    <property type="match status" value="1"/>
</dbReference>
<dbReference type="PRINTS" id="PR00395">
    <property type="entry name" value="RIBOSOMALS2"/>
</dbReference>
<dbReference type="SUPFAM" id="SSF52313">
    <property type="entry name" value="Ribosomal protein S2"/>
    <property type="match status" value="1"/>
</dbReference>
<dbReference type="PROSITE" id="PS00962">
    <property type="entry name" value="RIBOSOMAL_S2_1"/>
    <property type="match status" value="1"/>
</dbReference>
<dbReference type="PROSITE" id="PS00963">
    <property type="entry name" value="RIBOSOMAL_S2_2"/>
    <property type="match status" value="1"/>
</dbReference>
<sequence length="241" mass="26841">MATVSMRDMLQAGVHFGHQTRYWNPKMKPFIFGARNKVHIINLEKTVPMFNEALAELTKISSRKGKILFVGTKRAASEAVKEAANNCDQFFVNHRWLGGMLTNWKTVRQSIKRLKDLEIQSQDGTFDKLTKKEALMRTRELNKLENSLGGIKDMGGLPDALFVVDADHEHIAIKEANNLGIPVFSIVDTNSDPDGVDFIIPGNDDAIRAVKLYLGAVATAVREGRSQDLAVQAEESFVEAE</sequence>
<feature type="chain" id="PRO_1000115080" description="Small ribosomal subunit protein uS2">
    <location>
        <begin position="1"/>
        <end position="241"/>
    </location>
</feature>
<protein>
    <recommendedName>
        <fullName evidence="1">Small ribosomal subunit protein uS2</fullName>
    </recommendedName>
    <alternativeName>
        <fullName evidence="2">30S ribosomal protein S2</fullName>
    </alternativeName>
</protein>
<evidence type="ECO:0000255" key="1">
    <source>
        <dbReference type="HAMAP-Rule" id="MF_00291"/>
    </source>
</evidence>
<evidence type="ECO:0000305" key="2"/>
<organism>
    <name type="scientific">Yersinia pestis bv. Antiqua (strain Angola)</name>
    <dbReference type="NCBI Taxonomy" id="349746"/>
    <lineage>
        <taxon>Bacteria</taxon>
        <taxon>Pseudomonadati</taxon>
        <taxon>Pseudomonadota</taxon>
        <taxon>Gammaproteobacteria</taxon>
        <taxon>Enterobacterales</taxon>
        <taxon>Yersiniaceae</taxon>
        <taxon>Yersinia</taxon>
    </lineage>
</organism>
<keyword id="KW-0687">Ribonucleoprotein</keyword>
<keyword id="KW-0689">Ribosomal protein</keyword>
<reference key="1">
    <citation type="journal article" date="2010" name="J. Bacteriol.">
        <title>Genome sequence of the deep-rooted Yersinia pestis strain Angola reveals new insights into the evolution and pangenome of the plague bacterium.</title>
        <authorList>
            <person name="Eppinger M."/>
            <person name="Worsham P.L."/>
            <person name="Nikolich M.P."/>
            <person name="Riley D.R."/>
            <person name="Sebastian Y."/>
            <person name="Mou S."/>
            <person name="Achtman M."/>
            <person name="Lindler L.E."/>
            <person name="Ravel J."/>
        </authorList>
    </citation>
    <scope>NUCLEOTIDE SEQUENCE [LARGE SCALE GENOMIC DNA]</scope>
    <source>
        <strain>Angola</strain>
    </source>
</reference>
<proteinExistence type="inferred from homology"/>
<gene>
    <name evidence="1" type="primary">rpsB</name>
    <name type="ordered locus">YpAngola_A3435</name>
</gene>
<accession>A9R396</accession>
<comment type="similarity">
    <text evidence="1">Belongs to the universal ribosomal protein uS2 family.</text>
</comment>